<proteinExistence type="inferred from homology"/>
<feature type="chain" id="PRO_0000048039" description="DNA-directed RNA polymerase subunit beta">
    <location>
        <begin position="1"/>
        <end position="1085"/>
    </location>
</feature>
<organism>
    <name type="scientific">Physcomitrium patens</name>
    <name type="common">Spreading-leaved earth moss</name>
    <name type="synonym">Physcomitrella patens</name>
    <dbReference type="NCBI Taxonomy" id="3218"/>
    <lineage>
        <taxon>Eukaryota</taxon>
        <taxon>Viridiplantae</taxon>
        <taxon>Streptophyta</taxon>
        <taxon>Embryophyta</taxon>
        <taxon>Bryophyta</taxon>
        <taxon>Bryophytina</taxon>
        <taxon>Bryopsida</taxon>
        <taxon>Funariidae</taxon>
        <taxon>Funariales</taxon>
        <taxon>Funariaceae</taxon>
        <taxon>Physcomitrium</taxon>
    </lineage>
</organism>
<sequence length="1085" mass="124109">MKKIITLSAPPPSQFSFLSEFQFSLPELRQIQFKSYYYFIYKNLISELNIFPEIFDLNQEFQFELLNKEYKLIKPEKTTIKFHYNTYSSDLYVTCRLLRRKKKIEIQKQTIFIGSIPLIDYQSTFRINSVTRVIINQILRSPGIYYNSELDHNGISIYTGTIISDWGGRLKLEIDSKTRIWARISKKRKVSILVLLLAMGLTIKQILDSVCSSKIFLDFLKEKKKKKEHLQSTEDAMVELYKQLYYIGGDLLFSESIRKELQKKFFQQRCELGKIGRLNVNKKLSLDIPENEFFLLPQDILAAIDYLIKIKFGIGTLDDIDHLKNRRIRSVADLLQDQLKLALIRLENSVRQVMRRTTKRKRLLSPKNLITQTPLIATFKEFFGSHPLSQFLDQTNSLAEIVHKRRLSSLGPGGVTRRTAGFQVRDIHFSHYTRICPIETSEGMNAGLIASLAIHANVNNWGFLESPFYKISKNVKEEKIINLSAGEDEYYRIATGNCLALDQGTQKIQITPARYRQEFLAIAWEQIHLRSIYPLQYFSVGVSLIPFLEHNDANRALMGSNMQRQAVPLIKLEKCIVGTGLESQVALDSGNVMITKQSEKIMYTDGKKISLLNNTNETVNTHLIIYQRSNNSTCIHQKPQVISKKFLKKGQVLTDGAAILKGELTLGKNILVAYMPWEGYNFEDAILISERLIYEDIYTSIHIERYEIESRNTNQGPEKITKEIPHLENSVLRHLDKNGLVIPGSWVETGDVLVGKLTPQETEESLRAPEGKLLQAIFGIQVTNAKETCLKVPLNGKGRVIDVIWISKKENSSNYEKIIHVYIAQKRKIQVGDKVAGRHGNKGIISKILPRQDMPYLQDGTPIDMVLSPLGVPSRMNVGQIFECLLGLAGYFLGKHYRITPFDEKYEREASRKLVFSELYKASKKTGNLWLFEPENPGKSRLLNGRTGEIFEQAVTVGKAYMLKLIHQVDDKIHARSSGPYALVTQQPLRGRSRRGGQRVGEMEVWALEGFGVAYILQEMLTIKSDHIHARYEVLGAIITGEPIPKPKTAPESFLLLVRELRSLSLELDHAVIFEKNLNIKFKDV</sequence>
<keyword id="KW-0150">Chloroplast</keyword>
<keyword id="KW-0240">DNA-directed RNA polymerase</keyword>
<keyword id="KW-0548">Nucleotidyltransferase</keyword>
<keyword id="KW-0934">Plastid</keyword>
<keyword id="KW-1185">Reference proteome</keyword>
<keyword id="KW-0804">Transcription</keyword>
<keyword id="KW-0808">Transferase</keyword>
<protein>
    <recommendedName>
        <fullName evidence="1">DNA-directed RNA polymerase subunit beta</fullName>
        <ecNumber evidence="1">2.7.7.6</ecNumber>
    </recommendedName>
    <alternativeName>
        <fullName evidence="1">PEP</fullName>
    </alternativeName>
    <alternativeName>
        <fullName evidence="1">Plastid-encoded RNA polymerase subunit beta</fullName>
        <shortName evidence="1">RNA polymerase subunit beta</shortName>
    </alternativeName>
</protein>
<reference key="1">
    <citation type="journal article" date="2003" name="Nucleic Acids Res.">
        <title>Complete chloroplast DNA sequence of the moss Physcomitrella patens: evidence for the loss and relocation of rpoA from the chloroplast to the nucleus.</title>
        <authorList>
            <person name="Sugiura C."/>
            <person name="Kobayashi Y."/>
            <person name="Setsuyuki A."/>
            <person name="Sugita C."/>
            <person name="Sugita M."/>
        </authorList>
    </citation>
    <scope>NUCLEOTIDE SEQUENCE [LARGE SCALE GENOMIC DNA]</scope>
    <source>
        <strain>cv. Gransden 2004</strain>
    </source>
</reference>
<name>RPOB_PHYPA</name>
<comment type="function">
    <text evidence="1">DNA-dependent RNA polymerase catalyzes the transcription of DNA into RNA using the four ribonucleoside triphosphates as substrates.</text>
</comment>
<comment type="catalytic activity">
    <reaction evidence="1">
        <text>RNA(n) + a ribonucleoside 5'-triphosphate = RNA(n+1) + diphosphate</text>
        <dbReference type="Rhea" id="RHEA:21248"/>
        <dbReference type="Rhea" id="RHEA-COMP:14527"/>
        <dbReference type="Rhea" id="RHEA-COMP:17342"/>
        <dbReference type="ChEBI" id="CHEBI:33019"/>
        <dbReference type="ChEBI" id="CHEBI:61557"/>
        <dbReference type="ChEBI" id="CHEBI:140395"/>
        <dbReference type="EC" id="2.7.7.6"/>
    </reaction>
</comment>
<comment type="subunit">
    <text evidence="1">In plastids the minimal PEP RNA polymerase catalytic core is composed of four subunits: alpha, beta, beta', and beta''. When a (nuclear-encoded) sigma factor is associated with the core the holoenzyme is formed, which can initiate transcription.</text>
</comment>
<comment type="subcellular location">
    <subcellularLocation>
        <location>Plastid</location>
        <location>Chloroplast</location>
    </subcellularLocation>
</comment>
<comment type="similarity">
    <text evidence="1">Belongs to the RNA polymerase beta chain family.</text>
</comment>
<gene>
    <name evidence="1" type="primary">rpoB</name>
</gene>
<accession>P60283</accession>
<dbReference type="EC" id="2.7.7.6" evidence="1"/>
<dbReference type="EMBL" id="AP005672">
    <property type="protein sequence ID" value="BAC85073.1"/>
    <property type="molecule type" value="Genomic_DNA"/>
</dbReference>
<dbReference type="RefSeq" id="NP_904223.1">
    <property type="nucleotide sequence ID" value="NC_005087.2"/>
</dbReference>
<dbReference type="RefSeq" id="YP_009477553.1">
    <property type="nucleotide sequence ID" value="NC_037465.1"/>
</dbReference>
<dbReference type="SMR" id="P60283"/>
<dbReference type="FunCoup" id="P60283">
    <property type="interactions" value="341"/>
</dbReference>
<dbReference type="STRING" id="3218.P60283"/>
<dbReference type="GeneID" id="2546814"/>
<dbReference type="GeneID" id="36487187"/>
<dbReference type="KEGG" id="ppp:2546814"/>
<dbReference type="InParanoid" id="P60283"/>
<dbReference type="OrthoDB" id="1678757at2759"/>
<dbReference type="Proteomes" id="UP000006727">
    <property type="component" value="Chloroplast"/>
</dbReference>
<dbReference type="GO" id="GO:0009507">
    <property type="term" value="C:chloroplast"/>
    <property type="evidence" value="ECO:0007669"/>
    <property type="project" value="UniProtKB-SubCell"/>
</dbReference>
<dbReference type="GO" id="GO:0000428">
    <property type="term" value="C:DNA-directed RNA polymerase complex"/>
    <property type="evidence" value="ECO:0007669"/>
    <property type="project" value="UniProtKB-KW"/>
</dbReference>
<dbReference type="GO" id="GO:0005739">
    <property type="term" value="C:mitochondrion"/>
    <property type="evidence" value="ECO:0007669"/>
    <property type="project" value="GOC"/>
</dbReference>
<dbReference type="GO" id="GO:0003677">
    <property type="term" value="F:DNA binding"/>
    <property type="evidence" value="ECO:0007669"/>
    <property type="project" value="UniProtKB-UniRule"/>
</dbReference>
<dbReference type="GO" id="GO:0003899">
    <property type="term" value="F:DNA-directed RNA polymerase activity"/>
    <property type="evidence" value="ECO:0007669"/>
    <property type="project" value="UniProtKB-UniRule"/>
</dbReference>
<dbReference type="GO" id="GO:0032549">
    <property type="term" value="F:ribonucleoside binding"/>
    <property type="evidence" value="ECO:0007669"/>
    <property type="project" value="InterPro"/>
</dbReference>
<dbReference type="GO" id="GO:0006351">
    <property type="term" value="P:DNA-templated transcription"/>
    <property type="evidence" value="ECO:0007669"/>
    <property type="project" value="UniProtKB-UniRule"/>
</dbReference>
<dbReference type="CDD" id="cd00653">
    <property type="entry name" value="RNA_pol_B_RPB2"/>
    <property type="match status" value="1"/>
</dbReference>
<dbReference type="Gene3D" id="2.40.50.100">
    <property type="match status" value="1"/>
</dbReference>
<dbReference type="Gene3D" id="2.40.50.150">
    <property type="match status" value="1"/>
</dbReference>
<dbReference type="Gene3D" id="3.90.1100.10">
    <property type="match status" value="1"/>
</dbReference>
<dbReference type="Gene3D" id="2.30.150.10">
    <property type="entry name" value="DNA-directed RNA polymerase, beta subunit, external 1 domain"/>
    <property type="match status" value="1"/>
</dbReference>
<dbReference type="Gene3D" id="2.40.270.10">
    <property type="entry name" value="DNA-directed RNA polymerase, subunit 2, domain 6"/>
    <property type="match status" value="1"/>
</dbReference>
<dbReference type="Gene3D" id="3.90.1800.10">
    <property type="entry name" value="RNA polymerase alpha subunit dimerisation domain"/>
    <property type="match status" value="1"/>
</dbReference>
<dbReference type="Gene3D" id="3.90.1110.10">
    <property type="entry name" value="RNA polymerase Rpb2, domain 2"/>
    <property type="match status" value="1"/>
</dbReference>
<dbReference type="HAMAP" id="MF_01321">
    <property type="entry name" value="RNApol_bact_RpoB"/>
    <property type="match status" value="1"/>
</dbReference>
<dbReference type="InterPro" id="IPR042107">
    <property type="entry name" value="DNA-dir_RNA_pol_bsu_ext_1_sf"/>
</dbReference>
<dbReference type="InterPro" id="IPR015712">
    <property type="entry name" value="DNA-dir_RNA_pol_su2"/>
</dbReference>
<dbReference type="InterPro" id="IPR007120">
    <property type="entry name" value="DNA-dir_RNAP_su2_dom"/>
</dbReference>
<dbReference type="InterPro" id="IPR037033">
    <property type="entry name" value="DNA-dir_RNAP_su2_hyb_sf"/>
</dbReference>
<dbReference type="InterPro" id="IPR010243">
    <property type="entry name" value="RNA_pol_bsu_bac"/>
</dbReference>
<dbReference type="InterPro" id="IPR007121">
    <property type="entry name" value="RNA_pol_bsu_CS"/>
</dbReference>
<dbReference type="InterPro" id="IPR007642">
    <property type="entry name" value="RNA_pol_Rpb2_2"/>
</dbReference>
<dbReference type="InterPro" id="IPR037034">
    <property type="entry name" value="RNA_pol_Rpb2_2_sf"/>
</dbReference>
<dbReference type="InterPro" id="IPR007645">
    <property type="entry name" value="RNA_pol_Rpb2_3"/>
</dbReference>
<dbReference type="InterPro" id="IPR007641">
    <property type="entry name" value="RNA_pol_Rpb2_7"/>
</dbReference>
<dbReference type="InterPro" id="IPR014724">
    <property type="entry name" value="RNA_pol_RPB2_OB-fold"/>
</dbReference>
<dbReference type="NCBIfam" id="NF001616">
    <property type="entry name" value="PRK00405.1"/>
    <property type="match status" value="1"/>
</dbReference>
<dbReference type="PANTHER" id="PTHR20856">
    <property type="entry name" value="DNA-DIRECTED RNA POLYMERASE I SUBUNIT 2"/>
    <property type="match status" value="1"/>
</dbReference>
<dbReference type="Pfam" id="PF04561">
    <property type="entry name" value="RNA_pol_Rpb2_2"/>
    <property type="match status" value="1"/>
</dbReference>
<dbReference type="Pfam" id="PF04565">
    <property type="entry name" value="RNA_pol_Rpb2_3"/>
    <property type="match status" value="1"/>
</dbReference>
<dbReference type="Pfam" id="PF00562">
    <property type="entry name" value="RNA_pol_Rpb2_6"/>
    <property type="match status" value="1"/>
</dbReference>
<dbReference type="Pfam" id="PF04560">
    <property type="entry name" value="RNA_pol_Rpb2_7"/>
    <property type="match status" value="1"/>
</dbReference>
<dbReference type="SUPFAM" id="SSF64484">
    <property type="entry name" value="beta and beta-prime subunits of DNA dependent RNA-polymerase"/>
    <property type="match status" value="1"/>
</dbReference>
<dbReference type="PROSITE" id="PS01166">
    <property type="entry name" value="RNA_POL_BETA"/>
    <property type="match status" value="1"/>
</dbReference>
<evidence type="ECO:0000255" key="1">
    <source>
        <dbReference type="HAMAP-Rule" id="MF_01321"/>
    </source>
</evidence>
<geneLocation type="chloroplast"/>